<comment type="similarity">
    <text evidence="1">Belongs to the universal ribosomal protein uL29 family.</text>
</comment>
<feature type="chain" id="PRO_0000130490" description="Large ribosomal subunit protein uL29">
    <location>
        <begin position="1"/>
        <end position="75"/>
    </location>
</feature>
<keyword id="KW-1185">Reference proteome</keyword>
<keyword id="KW-0687">Ribonucleoprotein</keyword>
<keyword id="KW-0689">Ribosomal protein</keyword>
<name>RL29_UREPA</name>
<accession>Q9PQQ2</accession>
<proteinExistence type="inferred from homology"/>
<organism>
    <name type="scientific">Ureaplasma parvum serovar 3 (strain ATCC 700970)</name>
    <dbReference type="NCBI Taxonomy" id="273119"/>
    <lineage>
        <taxon>Bacteria</taxon>
        <taxon>Bacillati</taxon>
        <taxon>Mycoplasmatota</taxon>
        <taxon>Mycoplasmoidales</taxon>
        <taxon>Mycoplasmoidaceae</taxon>
        <taxon>Ureaplasma</taxon>
    </lineage>
</organism>
<reference key="1">
    <citation type="journal article" date="2000" name="Nature">
        <title>The complete sequence of the mucosal pathogen Ureaplasma urealyticum.</title>
        <authorList>
            <person name="Glass J.I."/>
            <person name="Lefkowitz E.J."/>
            <person name="Glass J.S."/>
            <person name="Heiner C.R."/>
            <person name="Chen E.Y."/>
            <person name="Cassell G.H."/>
        </authorList>
    </citation>
    <scope>NUCLEOTIDE SEQUENCE [LARGE SCALE GENOMIC DNA]</scope>
    <source>
        <strain>ATCC 700970</strain>
    </source>
</reference>
<evidence type="ECO:0000305" key="1"/>
<dbReference type="EMBL" id="AF222894">
    <property type="protein sequence ID" value="AAF30648.1"/>
    <property type="molecule type" value="Genomic_DNA"/>
</dbReference>
<dbReference type="RefSeq" id="WP_004026203.1">
    <property type="nucleotide sequence ID" value="NC_002162.1"/>
</dbReference>
<dbReference type="SMR" id="Q9PQQ2"/>
<dbReference type="STRING" id="273119.UU239"/>
<dbReference type="EnsemblBacteria" id="AAF30648">
    <property type="protein sequence ID" value="AAF30648"/>
    <property type="gene ID" value="UU239"/>
</dbReference>
<dbReference type="GeneID" id="93848714"/>
<dbReference type="KEGG" id="uur:UU239"/>
<dbReference type="eggNOG" id="COG0255">
    <property type="taxonomic scope" value="Bacteria"/>
</dbReference>
<dbReference type="HOGENOM" id="CLU_158491_2_0_14"/>
<dbReference type="OrthoDB" id="9815192at2"/>
<dbReference type="Proteomes" id="UP000000423">
    <property type="component" value="Chromosome"/>
</dbReference>
<dbReference type="GO" id="GO:0022625">
    <property type="term" value="C:cytosolic large ribosomal subunit"/>
    <property type="evidence" value="ECO:0007669"/>
    <property type="project" value="TreeGrafter"/>
</dbReference>
<dbReference type="GO" id="GO:0003735">
    <property type="term" value="F:structural constituent of ribosome"/>
    <property type="evidence" value="ECO:0007669"/>
    <property type="project" value="InterPro"/>
</dbReference>
<dbReference type="GO" id="GO:0006412">
    <property type="term" value="P:translation"/>
    <property type="evidence" value="ECO:0007669"/>
    <property type="project" value="UniProtKB-UniRule"/>
</dbReference>
<dbReference type="CDD" id="cd00427">
    <property type="entry name" value="Ribosomal_L29_HIP"/>
    <property type="match status" value="1"/>
</dbReference>
<dbReference type="Gene3D" id="1.10.287.310">
    <property type="match status" value="1"/>
</dbReference>
<dbReference type="HAMAP" id="MF_00374">
    <property type="entry name" value="Ribosomal_uL29"/>
    <property type="match status" value="1"/>
</dbReference>
<dbReference type="InterPro" id="IPR050063">
    <property type="entry name" value="Ribosomal_protein_uL29"/>
</dbReference>
<dbReference type="InterPro" id="IPR001854">
    <property type="entry name" value="Ribosomal_uL29"/>
</dbReference>
<dbReference type="InterPro" id="IPR018254">
    <property type="entry name" value="Ribosomal_uL29_CS"/>
</dbReference>
<dbReference type="InterPro" id="IPR036049">
    <property type="entry name" value="Ribosomal_uL29_sf"/>
</dbReference>
<dbReference type="NCBIfam" id="TIGR00012">
    <property type="entry name" value="L29"/>
    <property type="match status" value="1"/>
</dbReference>
<dbReference type="PANTHER" id="PTHR10916">
    <property type="entry name" value="60S RIBOSOMAL PROTEIN L35/50S RIBOSOMAL PROTEIN L29"/>
    <property type="match status" value="1"/>
</dbReference>
<dbReference type="PANTHER" id="PTHR10916:SF0">
    <property type="entry name" value="LARGE RIBOSOMAL SUBUNIT PROTEIN UL29C"/>
    <property type="match status" value="1"/>
</dbReference>
<dbReference type="Pfam" id="PF00831">
    <property type="entry name" value="Ribosomal_L29"/>
    <property type="match status" value="1"/>
</dbReference>
<dbReference type="SUPFAM" id="SSF46561">
    <property type="entry name" value="Ribosomal protein L29 (L29p)"/>
    <property type="match status" value="1"/>
</dbReference>
<dbReference type="PROSITE" id="PS00579">
    <property type="entry name" value="RIBOSOMAL_L29"/>
    <property type="match status" value="1"/>
</dbReference>
<sequence length="75" mass="8513">MSSIAQDLRKKDSLELEKIVIELKAKLLELRFAAANGEAEKLHTAKEIRKTIARALTILNERELAEKLNNKEANK</sequence>
<protein>
    <recommendedName>
        <fullName evidence="1">Large ribosomal subunit protein uL29</fullName>
    </recommendedName>
    <alternativeName>
        <fullName>50S ribosomal protein L29</fullName>
    </alternativeName>
</protein>
<gene>
    <name type="primary">rpmC</name>
    <name type="synonym">rpl29</name>
    <name type="ordered locus">UU239</name>
</gene>